<protein>
    <recommendedName>
        <fullName evidence="2">Large ribosomal subunit protein bL27</fullName>
    </recommendedName>
    <alternativeName>
        <fullName evidence="3">50S ribosomal protein L27</fullName>
    </alternativeName>
</protein>
<accession>Q6GG59</accession>
<proteinExistence type="inferred from homology"/>
<keyword id="KW-0687">Ribonucleoprotein</keyword>
<keyword id="KW-0689">Ribosomal protein</keyword>
<organism>
    <name type="scientific">Staphylococcus aureus (strain MRSA252)</name>
    <dbReference type="NCBI Taxonomy" id="282458"/>
    <lineage>
        <taxon>Bacteria</taxon>
        <taxon>Bacillati</taxon>
        <taxon>Bacillota</taxon>
        <taxon>Bacilli</taxon>
        <taxon>Bacillales</taxon>
        <taxon>Staphylococcaceae</taxon>
        <taxon>Staphylococcus</taxon>
    </lineage>
</organism>
<evidence type="ECO:0000250" key="1">
    <source>
        <dbReference type="UniProtKB" id="Q2FXT0"/>
    </source>
</evidence>
<evidence type="ECO:0000255" key="2">
    <source>
        <dbReference type="HAMAP-Rule" id="MF_00539"/>
    </source>
</evidence>
<evidence type="ECO:0000305" key="3"/>
<name>RL27_STAAR</name>
<feature type="propeptide" id="PRO_0000459931" evidence="1">
    <location>
        <begin position="1"/>
        <end position="9"/>
    </location>
</feature>
<feature type="chain" id="PRO_0000181167" description="Large ribosomal subunit protein bL27">
    <location>
        <begin position="10"/>
        <end position="94"/>
    </location>
</feature>
<sequence>MLKLNLQFFASKKGVSSTKNGRDSESKRLGAKRADGQFVTGGSILYRQRGTKIYPGENVGRGGDDTLFAKIDGVVKFERKGRDKKQVSVYAVAE</sequence>
<reference key="1">
    <citation type="journal article" date="2004" name="Proc. Natl. Acad. Sci. U.S.A.">
        <title>Complete genomes of two clinical Staphylococcus aureus strains: evidence for the rapid evolution of virulence and drug resistance.</title>
        <authorList>
            <person name="Holden M.T.G."/>
            <person name="Feil E.J."/>
            <person name="Lindsay J.A."/>
            <person name="Peacock S.J."/>
            <person name="Day N.P.J."/>
            <person name="Enright M.C."/>
            <person name="Foster T.J."/>
            <person name="Moore C.E."/>
            <person name="Hurst L."/>
            <person name="Atkin R."/>
            <person name="Barron A."/>
            <person name="Bason N."/>
            <person name="Bentley S.D."/>
            <person name="Chillingworth C."/>
            <person name="Chillingworth T."/>
            <person name="Churcher C."/>
            <person name="Clark L."/>
            <person name="Corton C."/>
            <person name="Cronin A."/>
            <person name="Doggett J."/>
            <person name="Dowd L."/>
            <person name="Feltwell T."/>
            <person name="Hance Z."/>
            <person name="Harris B."/>
            <person name="Hauser H."/>
            <person name="Holroyd S."/>
            <person name="Jagels K."/>
            <person name="James K.D."/>
            <person name="Lennard N."/>
            <person name="Line A."/>
            <person name="Mayes R."/>
            <person name="Moule S."/>
            <person name="Mungall K."/>
            <person name="Ormond D."/>
            <person name="Quail M.A."/>
            <person name="Rabbinowitsch E."/>
            <person name="Rutherford K.M."/>
            <person name="Sanders M."/>
            <person name="Sharp S."/>
            <person name="Simmonds M."/>
            <person name="Stevens K."/>
            <person name="Whitehead S."/>
            <person name="Barrell B.G."/>
            <person name="Spratt B.G."/>
            <person name="Parkhill J."/>
        </authorList>
    </citation>
    <scope>NUCLEOTIDE SEQUENCE [LARGE SCALE GENOMIC DNA]</scope>
    <source>
        <strain>MRSA252</strain>
    </source>
</reference>
<comment type="PTM">
    <text evidence="1">The N-terminus is cleaved by ribosomal processing cysteine protease Prp.</text>
</comment>
<comment type="similarity">
    <text evidence="2">Belongs to the bacterial ribosomal protein bL27 family.</text>
</comment>
<dbReference type="EMBL" id="BX571856">
    <property type="protein sequence ID" value="CAG40716.1"/>
    <property type="molecule type" value="Genomic_DNA"/>
</dbReference>
<dbReference type="RefSeq" id="WP_000916187.1">
    <property type="nucleotide sequence ID" value="NC_002952.2"/>
</dbReference>
<dbReference type="SMR" id="Q6GG59"/>
<dbReference type="GeneID" id="98346013"/>
<dbReference type="KEGG" id="sar:SAR1725"/>
<dbReference type="HOGENOM" id="CLU_095424_4_0_9"/>
<dbReference type="Proteomes" id="UP000000596">
    <property type="component" value="Chromosome"/>
</dbReference>
<dbReference type="GO" id="GO:0022625">
    <property type="term" value="C:cytosolic large ribosomal subunit"/>
    <property type="evidence" value="ECO:0007669"/>
    <property type="project" value="TreeGrafter"/>
</dbReference>
<dbReference type="GO" id="GO:0003735">
    <property type="term" value="F:structural constituent of ribosome"/>
    <property type="evidence" value="ECO:0007669"/>
    <property type="project" value="InterPro"/>
</dbReference>
<dbReference type="GO" id="GO:0006412">
    <property type="term" value="P:translation"/>
    <property type="evidence" value="ECO:0007669"/>
    <property type="project" value="UniProtKB-UniRule"/>
</dbReference>
<dbReference type="FunFam" id="2.40.50.100:FF:000004">
    <property type="entry name" value="50S ribosomal protein L27"/>
    <property type="match status" value="1"/>
</dbReference>
<dbReference type="Gene3D" id="2.40.50.100">
    <property type="match status" value="1"/>
</dbReference>
<dbReference type="HAMAP" id="MF_00539">
    <property type="entry name" value="Ribosomal_bL27"/>
    <property type="match status" value="1"/>
</dbReference>
<dbReference type="InterPro" id="IPR001684">
    <property type="entry name" value="Ribosomal_bL27"/>
</dbReference>
<dbReference type="InterPro" id="IPR018261">
    <property type="entry name" value="Ribosomal_bL27_CS"/>
</dbReference>
<dbReference type="NCBIfam" id="TIGR00062">
    <property type="entry name" value="L27"/>
    <property type="match status" value="1"/>
</dbReference>
<dbReference type="PANTHER" id="PTHR15893:SF0">
    <property type="entry name" value="LARGE RIBOSOMAL SUBUNIT PROTEIN BL27M"/>
    <property type="match status" value="1"/>
</dbReference>
<dbReference type="PANTHER" id="PTHR15893">
    <property type="entry name" value="RIBOSOMAL PROTEIN L27"/>
    <property type="match status" value="1"/>
</dbReference>
<dbReference type="Pfam" id="PF01016">
    <property type="entry name" value="Ribosomal_L27"/>
    <property type="match status" value="1"/>
</dbReference>
<dbReference type="PRINTS" id="PR00063">
    <property type="entry name" value="RIBOSOMALL27"/>
</dbReference>
<dbReference type="SUPFAM" id="SSF110324">
    <property type="entry name" value="Ribosomal L27 protein-like"/>
    <property type="match status" value="1"/>
</dbReference>
<dbReference type="PROSITE" id="PS00831">
    <property type="entry name" value="RIBOSOMAL_L27"/>
    <property type="match status" value="1"/>
</dbReference>
<gene>
    <name evidence="2" type="primary">rpmA</name>
    <name type="ordered locus">SAR1725</name>
</gene>